<accession>Q197B0</accession>
<evidence type="ECO:0000305" key="1"/>
<protein>
    <recommendedName>
        <fullName>Uncharacterized protein 050L</fullName>
    </recommendedName>
</protein>
<feature type="chain" id="PRO_0000377928" description="Uncharacterized protein 050L">
    <location>
        <begin position="1"/>
        <end position="152"/>
    </location>
</feature>
<sequence>MDMIVEYLFCCKYTTNNKIIDLLEDLATRKVKCNLTAKLDQYGENYHQLYLDVLKNFKDVCTSTTQQDGTVIKNWSSIRKKNLKDLILKNFIIEVKYRYGFDDQTTENLKRDINMRLNFKTIGDKTIIIKNNKIKKIVGLNLTTNNYSWDES</sequence>
<dbReference type="EMBL" id="DQ643392">
    <property type="protein sequence ID" value="ABF82080.1"/>
    <property type="molecule type" value="Genomic_DNA"/>
</dbReference>
<dbReference type="RefSeq" id="YP_654622.1">
    <property type="nucleotide sequence ID" value="NC_008187.1"/>
</dbReference>
<dbReference type="KEGG" id="vg:4156300"/>
<dbReference type="OrthoDB" id="20858at10239"/>
<dbReference type="Proteomes" id="UP000001358">
    <property type="component" value="Genome"/>
</dbReference>
<organism>
    <name type="scientific">Invertebrate iridescent virus 3</name>
    <name type="common">IIV-3</name>
    <name type="synonym">Mosquito iridescent virus</name>
    <dbReference type="NCBI Taxonomy" id="345201"/>
    <lineage>
        <taxon>Viruses</taxon>
        <taxon>Varidnaviria</taxon>
        <taxon>Bamfordvirae</taxon>
        <taxon>Nucleocytoviricota</taxon>
        <taxon>Megaviricetes</taxon>
        <taxon>Pimascovirales</taxon>
        <taxon>Iridoviridae</taxon>
        <taxon>Betairidovirinae</taxon>
        <taxon>Chloriridovirus</taxon>
    </lineage>
</organism>
<proteinExistence type="inferred from homology"/>
<comment type="similarity">
    <text evidence="1">Belongs to the IIV-6 145L family.</text>
</comment>
<gene>
    <name type="ORF">IIV3-050L</name>
</gene>
<reference key="1">
    <citation type="journal article" date="2006" name="J. Virol.">
        <title>Genome of invertebrate iridescent virus type 3 (mosquito iridescent virus).</title>
        <authorList>
            <person name="Delhon G."/>
            <person name="Tulman E.R."/>
            <person name="Afonso C.L."/>
            <person name="Lu Z."/>
            <person name="Becnel J.J."/>
            <person name="Moser B.A."/>
            <person name="Kutish G.F."/>
            <person name="Rock D.L."/>
        </authorList>
    </citation>
    <scope>NUCLEOTIDE SEQUENCE [LARGE SCALE GENOMIC DNA]</scope>
</reference>
<keyword id="KW-1185">Reference proteome</keyword>
<organismHost>
    <name type="scientific">Aedes vexans</name>
    <name type="common">Inland floodwater mosquito</name>
    <name type="synonym">Culex vexans</name>
    <dbReference type="NCBI Taxonomy" id="7163"/>
</organismHost>
<organismHost>
    <name type="scientific">Culex territans</name>
    <dbReference type="NCBI Taxonomy" id="42431"/>
</organismHost>
<organismHost>
    <name type="scientific">Culiseta annulata</name>
    <dbReference type="NCBI Taxonomy" id="332058"/>
</organismHost>
<organismHost>
    <name type="scientific">Ochlerotatus sollicitans</name>
    <name type="common">eastern saltmarsh mosquito</name>
    <dbReference type="NCBI Taxonomy" id="310513"/>
</organismHost>
<organismHost>
    <name type="scientific">Ochlerotatus taeniorhynchus</name>
    <name type="common">Black salt marsh mosquito</name>
    <name type="synonym">Aedes taeniorhynchus</name>
    <dbReference type="NCBI Taxonomy" id="329105"/>
</organismHost>
<organismHost>
    <name type="scientific">Psorophora ferox</name>
    <dbReference type="NCBI Taxonomy" id="7183"/>
</organismHost>
<name>VF145_IIV3</name>